<sequence>MNLSLSGRKIAMTRVSAETQYITPIGSPTLDELLKDCDSFRKGDSGDGVKSDDPAHHIIDVEALYVKPVPYVLNFNNLQYDVTLRRRFGFSRQNGVKTLLDDVSGEASDGDILAVLGASGAGKSTLIDALAGRVAEGSLRGSVTLNGEKVLQSRLLKVISAYVMQDDLLFPMLTVKETLMFASEFRLPRSLSKSKKMERVEALIDQLGLRNAANTVIGDEGHRGVSGGERRRVSIGIDIIHDPIVLFLDEPTSGLDSTNAFMVVQVLKRIAQSGSIVIMSIHQPSARIVELLDRLIILSRGKSVFNGSPASLPGFFSDFGRPIPEKENISEFALDLVRELEGSNEGTKALVDFNEKWQQNKISLIQSAPQTNKLDQDRSLSLKEAINASVSRGKLVSGSSRSNPTSMETVSSYANPSLFETFILAKRYMKNWIRMPELVGTRIATVMVTGCLLATVYWKLDHTPRGAQERLTLFAFVVPTMFYCCLDNVPVFIQERYIFLRETTHNAYRTSSYVISHSLVSLPQLLAPSLVFSAITFWTVGLSGGLEGFVFYCLLIYASFWSGSSVVTFISGVVPNIMLCYMVSITYLAYCLLLSGFYVNRDRIPFYWTWFHYISILKYPYEAVLINEFDDPSRCFVRGVQVFDSTLLGGVSDSGKVKLLETLSKSLRTKITESTCLRTGSDLLAQQGITQLSKWDCLWITFASGLFFRILFYFALLFGSRNKRT</sequence>
<reference key="1">
    <citation type="journal article" date="2000" name="Nature">
        <title>Sequence and analysis of chromosome 3 of the plant Arabidopsis thaliana.</title>
        <authorList>
            <person name="Salanoubat M."/>
            <person name="Lemcke K."/>
            <person name="Rieger M."/>
            <person name="Ansorge W."/>
            <person name="Unseld M."/>
            <person name="Fartmann B."/>
            <person name="Valle G."/>
            <person name="Bloecker H."/>
            <person name="Perez-Alonso M."/>
            <person name="Obermaier B."/>
            <person name="Delseny M."/>
            <person name="Boutry M."/>
            <person name="Grivell L.A."/>
            <person name="Mache R."/>
            <person name="Puigdomenech P."/>
            <person name="De Simone V."/>
            <person name="Choisne N."/>
            <person name="Artiguenave F."/>
            <person name="Robert C."/>
            <person name="Brottier P."/>
            <person name="Wincker P."/>
            <person name="Cattolico L."/>
            <person name="Weissenbach J."/>
            <person name="Saurin W."/>
            <person name="Quetier F."/>
            <person name="Schaefer M."/>
            <person name="Mueller-Auer S."/>
            <person name="Gabel C."/>
            <person name="Fuchs M."/>
            <person name="Benes V."/>
            <person name="Wurmbach E."/>
            <person name="Drzonek H."/>
            <person name="Erfle H."/>
            <person name="Jordan N."/>
            <person name="Bangert S."/>
            <person name="Wiedelmann R."/>
            <person name="Kranz H."/>
            <person name="Voss H."/>
            <person name="Holland R."/>
            <person name="Brandt P."/>
            <person name="Nyakatura G."/>
            <person name="Vezzi A."/>
            <person name="D'Angelo M."/>
            <person name="Pallavicini A."/>
            <person name="Toppo S."/>
            <person name="Simionati B."/>
            <person name="Conrad A."/>
            <person name="Hornischer K."/>
            <person name="Kauer G."/>
            <person name="Loehnert T.-H."/>
            <person name="Nordsiek G."/>
            <person name="Reichelt J."/>
            <person name="Scharfe M."/>
            <person name="Schoen O."/>
            <person name="Bargues M."/>
            <person name="Terol J."/>
            <person name="Climent J."/>
            <person name="Navarro P."/>
            <person name="Collado C."/>
            <person name="Perez-Perez A."/>
            <person name="Ottenwaelder B."/>
            <person name="Duchemin D."/>
            <person name="Cooke R."/>
            <person name="Laudie M."/>
            <person name="Berger-Llauro C."/>
            <person name="Purnelle B."/>
            <person name="Masuy D."/>
            <person name="de Haan M."/>
            <person name="Maarse A.C."/>
            <person name="Alcaraz J.-P."/>
            <person name="Cottet A."/>
            <person name="Casacuberta E."/>
            <person name="Monfort A."/>
            <person name="Argiriou A."/>
            <person name="Flores M."/>
            <person name="Liguori R."/>
            <person name="Vitale D."/>
            <person name="Mannhaupt G."/>
            <person name="Haase D."/>
            <person name="Schoof H."/>
            <person name="Rudd S."/>
            <person name="Zaccaria P."/>
            <person name="Mewes H.-W."/>
            <person name="Mayer K.F.X."/>
            <person name="Kaul S."/>
            <person name="Town C.D."/>
            <person name="Koo H.L."/>
            <person name="Tallon L.J."/>
            <person name="Jenkins J."/>
            <person name="Rooney T."/>
            <person name="Rizzo M."/>
            <person name="Walts A."/>
            <person name="Utterback T."/>
            <person name="Fujii C.Y."/>
            <person name="Shea T.P."/>
            <person name="Creasy T.H."/>
            <person name="Haas B."/>
            <person name="Maiti R."/>
            <person name="Wu D."/>
            <person name="Peterson J."/>
            <person name="Van Aken S."/>
            <person name="Pai G."/>
            <person name="Militscher J."/>
            <person name="Sellers P."/>
            <person name="Gill J.E."/>
            <person name="Feldblyum T.V."/>
            <person name="Preuss D."/>
            <person name="Lin X."/>
            <person name="Nierman W.C."/>
            <person name="Salzberg S.L."/>
            <person name="White O."/>
            <person name="Venter J.C."/>
            <person name="Fraser C.M."/>
            <person name="Kaneko T."/>
            <person name="Nakamura Y."/>
            <person name="Sato S."/>
            <person name="Kato T."/>
            <person name="Asamizu E."/>
            <person name="Sasamoto S."/>
            <person name="Kimura T."/>
            <person name="Idesawa K."/>
            <person name="Kawashima K."/>
            <person name="Kishida Y."/>
            <person name="Kiyokawa C."/>
            <person name="Kohara M."/>
            <person name="Matsumoto M."/>
            <person name="Matsuno A."/>
            <person name="Muraki A."/>
            <person name="Nakayama S."/>
            <person name="Nakazaki N."/>
            <person name="Shinpo S."/>
            <person name="Takeuchi C."/>
            <person name="Wada T."/>
            <person name="Watanabe A."/>
            <person name="Yamada M."/>
            <person name="Yasuda M."/>
            <person name="Tabata S."/>
        </authorList>
    </citation>
    <scope>NUCLEOTIDE SEQUENCE [LARGE SCALE GENOMIC DNA]</scope>
    <source>
        <strain>cv. Columbia</strain>
    </source>
</reference>
<reference key="2">
    <citation type="journal article" date="2017" name="Plant J.">
        <title>Araport11: a complete reannotation of the Arabidopsis thaliana reference genome.</title>
        <authorList>
            <person name="Cheng C.Y."/>
            <person name="Krishnakumar V."/>
            <person name="Chan A.P."/>
            <person name="Thibaud-Nissen F."/>
            <person name="Schobel S."/>
            <person name="Town C.D."/>
        </authorList>
    </citation>
    <scope>GENOME REANNOTATION</scope>
    <source>
        <strain>cv. Columbia</strain>
    </source>
</reference>
<reference key="3">
    <citation type="journal article" date="2003" name="Science">
        <title>Empirical analysis of transcriptional activity in the Arabidopsis genome.</title>
        <authorList>
            <person name="Yamada K."/>
            <person name="Lim J."/>
            <person name="Dale J.M."/>
            <person name="Chen H."/>
            <person name="Shinn P."/>
            <person name="Palm C.J."/>
            <person name="Southwick A.M."/>
            <person name="Wu H.C."/>
            <person name="Kim C.J."/>
            <person name="Nguyen M."/>
            <person name="Pham P.K."/>
            <person name="Cheuk R.F."/>
            <person name="Karlin-Newmann G."/>
            <person name="Liu S.X."/>
            <person name="Lam B."/>
            <person name="Sakano H."/>
            <person name="Wu T."/>
            <person name="Yu G."/>
            <person name="Miranda M."/>
            <person name="Quach H.L."/>
            <person name="Tripp M."/>
            <person name="Chang C.H."/>
            <person name="Lee J.M."/>
            <person name="Toriumi M.J."/>
            <person name="Chan M.M."/>
            <person name="Tang C.C."/>
            <person name="Onodera C.S."/>
            <person name="Deng J.M."/>
            <person name="Akiyama K."/>
            <person name="Ansari Y."/>
            <person name="Arakawa T."/>
            <person name="Banh J."/>
            <person name="Banno F."/>
            <person name="Bowser L."/>
            <person name="Brooks S.Y."/>
            <person name="Carninci P."/>
            <person name="Chao Q."/>
            <person name="Choy N."/>
            <person name="Enju A."/>
            <person name="Goldsmith A.D."/>
            <person name="Gurjal M."/>
            <person name="Hansen N.F."/>
            <person name="Hayashizaki Y."/>
            <person name="Johnson-Hopson C."/>
            <person name="Hsuan V.W."/>
            <person name="Iida K."/>
            <person name="Karnes M."/>
            <person name="Khan S."/>
            <person name="Koesema E."/>
            <person name="Ishida J."/>
            <person name="Jiang P.X."/>
            <person name="Jones T."/>
            <person name="Kawai J."/>
            <person name="Kamiya A."/>
            <person name="Meyers C."/>
            <person name="Nakajima M."/>
            <person name="Narusaka M."/>
            <person name="Seki M."/>
            <person name="Sakurai T."/>
            <person name="Satou M."/>
            <person name="Tamse R."/>
            <person name="Vaysberg M."/>
            <person name="Wallender E.K."/>
            <person name="Wong C."/>
            <person name="Yamamura Y."/>
            <person name="Yuan S."/>
            <person name="Shinozaki K."/>
            <person name="Davis R.W."/>
            <person name="Theologis A."/>
            <person name="Ecker J.R."/>
        </authorList>
    </citation>
    <scope>NUCLEOTIDE SEQUENCE [LARGE SCALE MRNA]</scope>
    <source>
        <strain>cv. Columbia</strain>
    </source>
</reference>
<reference key="4">
    <citation type="journal article" date="2001" name="J. Biol. Chem.">
        <title>The Arabidopsis thaliana ABC protein superfamily, a complete inventory.</title>
        <authorList>
            <person name="Sanchez-Fernandez R."/>
            <person name="Davies T.G."/>
            <person name="Coleman J.O."/>
            <person name="Rea P.A."/>
        </authorList>
    </citation>
    <scope>GENE FAMILY</scope>
    <scope>NOMENCLATURE</scope>
</reference>
<reference key="5">
    <citation type="journal article" date="2005" name="Nat. Biotechnol.">
        <title>Overexpression of an Arabidopsis thaliana ABC transporter confers kanamycin resistance to transgenic plants.</title>
        <authorList>
            <person name="Mentewab A."/>
            <person name="Stewart C.N. Jr."/>
        </authorList>
    </citation>
    <scope>FUNCTION</scope>
    <scope>BIOTECHNOLOGY</scope>
    <scope>SUBCELLULAR LOCATION</scope>
</reference>
<reference key="6">
    <citation type="journal article" date="2008" name="Trends Plant Sci.">
        <title>Plant ABC proteins - a unified nomenclature and updated inventory.</title>
        <authorList>
            <person name="Verrier P.J."/>
            <person name="Bird D."/>
            <person name="Burla B."/>
            <person name="Dassa E."/>
            <person name="Forestier C."/>
            <person name="Geisler M."/>
            <person name="Klein M."/>
            <person name="Kolukisaoglu H.U."/>
            <person name="Lee Y."/>
            <person name="Martinoia E."/>
            <person name="Murphy A."/>
            <person name="Rea P.A."/>
            <person name="Samuels L."/>
            <person name="Schulz B."/>
            <person name="Spalding E.J."/>
            <person name="Yazaki K."/>
            <person name="Theodoulou F.L."/>
        </authorList>
    </citation>
    <scope>GENE FAMILY</scope>
    <scope>NOMENCLATURE</scope>
</reference>
<protein>
    <recommendedName>
        <fullName>ABC transporter G family member 19</fullName>
        <shortName>ABC transporter ABCG.19</shortName>
        <shortName>AtABCG19</shortName>
    </recommendedName>
    <alternativeName>
        <fullName>White-brown complex homolog protein 19</fullName>
        <shortName>AtWBC19</shortName>
    </alternativeName>
</protein>
<gene>
    <name type="primary">ABCG19</name>
    <name type="synonym">WBC19</name>
    <name type="ordered locus">At3g55130</name>
    <name type="ORF">T26I12.10</name>
</gene>
<keyword id="KW-0067">ATP-binding</keyword>
<keyword id="KW-0472">Membrane</keyword>
<keyword id="KW-0547">Nucleotide-binding</keyword>
<keyword id="KW-1185">Reference proteome</keyword>
<keyword id="KW-0812">Transmembrane</keyword>
<keyword id="KW-1133">Transmembrane helix</keyword>
<keyword id="KW-0813">Transport</keyword>
<keyword id="KW-0926">Vacuole</keyword>
<accession>Q9M3D6</accession>
<name>AB19G_ARATH</name>
<organism>
    <name type="scientific">Arabidopsis thaliana</name>
    <name type="common">Mouse-ear cress</name>
    <dbReference type="NCBI Taxonomy" id="3702"/>
    <lineage>
        <taxon>Eukaryota</taxon>
        <taxon>Viridiplantae</taxon>
        <taxon>Streptophyta</taxon>
        <taxon>Embryophyta</taxon>
        <taxon>Tracheophyta</taxon>
        <taxon>Spermatophyta</taxon>
        <taxon>Magnoliopsida</taxon>
        <taxon>eudicotyledons</taxon>
        <taxon>Gunneridae</taxon>
        <taxon>Pentapetalae</taxon>
        <taxon>rosids</taxon>
        <taxon>malvids</taxon>
        <taxon>Brassicales</taxon>
        <taxon>Brassicaceae</taxon>
        <taxon>Camelineae</taxon>
        <taxon>Arabidopsis</taxon>
    </lineage>
</organism>
<feature type="chain" id="PRO_0000240691" description="ABC transporter G family member 19">
    <location>
        <begin position="1"/>
        <end position="725"/>
    </location>
</feature>
<feature type="transmembrane region" description="Helical" evidence="1">
    <location>
        <begin position="438"/>
        <end position="458"/>
    </location>
</feature>
<feature type="transmembrane region" description="Helical" evidence="1">
    <location>
        <begin position="473"/>
        <end position="493"/>
    </location>
</feature>
<feature type="transmembrane region" description="Helical" evidence="1">
    <location>
        <begin position="515"/>
        <end position="535"/>
    </location>
</feature>
<feature type="transmembrane region" description="Helical" evidence="1">
    <location>
        <begin position="537"/>
        <end position="557"/>
    </location>
</feature>
<feature type="transmembrane region" description="Helical" evidence="1">
    <location>
        <begin position="577"/>
        <end position="597"/>
    </location>
</feature>
<feature type="transmembrane region" description="Helical" evidence="1">
    <location>
        <begin position="606"/>
        <end position="626"/>
    </location>
</feature>
<feature type="transmembrane region" description="Helical" evidence="1">
    <location>
        <begin position="698"/>
        <end position="718"/>
    </location>
</feature>
<feature type="domain" description="ABC transporter" evidence="2">
    <location>
        <begin position="73"/>
        <end position="325"/>
    </location>
</feature>
<feature type="domain" description="ABC transmembrane type-2">
    <location>
        <begin position="419"/>
        <end position="629"/>
    </location>
</feature>
<feature type="binding site" evidence="2">
    <location>
        <begin position="117"/>
        <end position="124"/>
    </location>
    <ligand>
        <name>ATP</name>
        <dbReference type="ChEBI" id="CHEBI:30616"/>
    </ligand>
</feature>
<proteinExistence type="evidence at protein level"/>
<evidence type="ECO:0000255" key="1"/>
<evidence type="ECO:0000255" key="2">
    <source>
        <dbReference type="PROSITE-ProRule" id="PRU00434"/>
    </source>
</evidence>
<evidence type="ECO:0000269" key="3">
    <source>
    </source>
</evidence>
<evidence type="ECO:0000305" key="4"/>
<dbReference type="EMBL" id="AL132954">
    <property type="protein sequence ID" value="CAB75747.1"/>
    <property type="molecule type" value="Genomic_DNA"/>
</dbReference>
<dbReference type="EMBL" id="CP002686">
    <property type="protein sequence ID" value="AEE79343.1"/>
    <property type="molecule type" value="Genomic_DNA"/>
</dbReference>
<dbReference type="EMBL" id="AY045932">
    <property type="protein sequence ID" value="AAK76606.1"/>
    <property type="molecule type" value="mRNA"/>
</dbReference>
<dbReference type="EMBL" id="AY079387">
    <property type="protein sequence ID" value="AAL85118.1"/>
    <property type="molecule type" value="mRNA"/>
</dbReference>
<dbReference type="PIR" id="T47652">
    <property type="entry name" value="T47652"/>
</dbReference>
<dbReference type="RefSeq" id="NP_191073.1">
    <property type="nucleotide sequence ID" value="NM_115371.3"/>
</dbReference>
<dbReference type="SMR" id="Q9M3D6"/>
<dbReference type="BioGRID" id="9995">
    <property type="interactions" value="7"/>
</dbReference>
<dbReference type="FunCoup" id="Q9M3D6">
    <property type="interactions" value="80"/>
</dbReference>
<dbReference type="IntAct" id="Q9M3D6">
    <property type="interactions" value="6"/>
</dbReference>
<dbReference type="STRING" id="3702.Q9M3D6"/>
<dbReference type="TCDB" id="3.A.1.204.27">
    <property type="family name" value="the atp-binding cassette (abc) superfamily"/>
</dbReference>
<dbReference type="PaxDb" id="3702-AT3G55130.1"/>
<dbReference type="ProteomicsDB" id="245141"/>
<dbReference type="EnsemblPlants" id="AT3G55130.1">
    <property type="protein sequence ID" value="AT3G55130.1"/>
    <property type="gene ID" value="AT3G55130"/>
</dbReference>
<dbReference type="GeneID" id="824679"/>
<dbReference type="Gramene" id="AT3G55130.1">
    <property type="protein sequence ID" value="AT3G55130.1"/>
    <property type="gene ID" value="AT3G55130"/>
</dbReference>
<dbReference type="KEGG" id="ath:AT3G55130"/>
<dbReference type="Araport" id="AT3G55130"/>
<dbReference type="TAIR" id="AT3G55130">
    <property type="gene designation" value="ABCG19"/>
</dbReference>
<dbReference type="eggNOG" id="KOG0061">
    <property type="taxonomic scope" value="Eukaryota"/>
</dbReference>
<dbReference type="HOGENOM" id="CLU_000604_57_8_1"/>
<dbReference type="InParanoid" id="Q9M3D6"/>
<dbReference type="OMA" id="KDCDSFR"/>
<dbReference type="PhylomeDB" id="Q9M3D6"/>
<dbReference type="PRO" id="PR:Q9M3D6"/>
<dbReference type="Proteomes" id="UP000006548">
    <property type="component" value="Chromosome 3"/>
</dbReference>
<dbReference type="ExpressionAtlas" id="Q9M3D6">
    <property type="expression patterns" value="baseline and differential"/>
</dbReference>
<dbReference type="GO" id="GO:0005775">
    <property type="term" value="C:vacuolar lumen"/>
    <property type="evidence" value="ECO:0000314"/>
    <property type="project" value="TAIR"/>
</dbReference>
<dbReference type="GO" id="GO:0005774">
    <property type="term" value="C:vacuolar membrane"/>
    <property type="evidence" value="ECO:0007669"/>
    <property type="project" value="UniProtKB-SubCell"/>
</dbReference>
<dbReference type="GO" id="GO:0140359">
    <property type="term" value="F:ABC-type transporter activity"/>
    <property type="evidence" value="ECO:0007669"/>
    <property type="project" value="InterPro"/>
</dbReference>
<dbReference type="GO" id="GO:0005524">
    <property type="term" value="F:ATP binding"/>
    <property type="evidence" value="ECO:0007669"/>
    <property type="project" value="UniProtKB-KW"/>
</dbReference>
<dbReference type="GO" id="GO:0016887">
    <property type="term" value="F:ATP hydrolysis activity"/>
    <property type="evidence" value="ECO:0007669"/>
    <property type="project" value="InterPro"/>
</dbReference>
<dbReference type="GO" id="GO:0007034">
    <property type="term" value="P:vacuolar transport"/>
    <property type="evidence" value="ECO:0000315"/>
    <property type="project" value="TAIR"/>
</dbReference>
<dbReference type="FunFam" id="3.40.50.300:FF:000530">
    <property type="entry name" value="ABC transporter G family member 6"/>
    <property type="match status" value="1"/>
</dbReference>
<dbReference type="Gene3D" id="3.40.50.300">
    <property type="entry name" value="P-loop containing nucleotide triphosphate hydrolases"/>
    <property type="match status" value="1"/>
</dbReference>
<dbReference type="InterPro" id="IPR003593">
    <property type="entry name" value="AAA+_ATPase"/>
</dbReference>
<dbReference type="InterPro" id="IPR013525">
    <property type="entry name" value="ABC2_TM"/>
</dbReference>
<dbReference type="InterPro" id="IPR003439">
    <property type="entry name" value="ABC_transporter-like_ATP-bd"/>
</dbReference>
<dbReference type="InterPro" id="IPR017871">
    <property type="entry name" value="ABC_transporter-like_CS"/>
</dbReference>
<dbReference type="InterPro" id="IPR050352">
    <property type="entry name" value="ABCG_transporters"/>
</dbReference>
<dbReference type="InterPro" id="IPR027417">
    <property type="entry name" value="P-loop_NTPase"/>
</dbReference>
<dbReference type="PANTHER" id="PTHR48041:SF37">
    <property type="entry name" value="ABC TRANSPORTER G FAMILY MEMBER 19"/>
    <property type="match status" value="1"/>
</dbReference>
<dbReference type="PANTHER" id="PTHR48041">
    <property type="entry name" value="ABC TRANSPORTER G FAMILY MEMBER 28"/>
    <property type="match status" value="1"/>
</dbReference>
<dbReference type="Pfam" id="PF01061">
    <property type="entry name" value="ABC2_membrane"/>
    <property type="match status" value="1"/>
</dbReference>
<dbReference type="Pfam" id="PF00005">
    <property type="entry name" value="ABC_tran"/>
    <property type="match status" value="1"/>
</dbReference>
<dbReference type="SMART" id="SM00382">
    <property type="entry name" value="AAA"/>
    <property type="match status" value="1"/>
</dbReference>
<dbReference type="SUPFAM" id="SSF52540">
    <property type="entry name" value="P-loop containing nucleoside triphosphate hydrolases"/>
    <property type="match status" value="1"/>
</dbReference>
<dbReference type="PROSITE" id="PS00211">
    <property type="entry name" value="ABC_TRANSPORTER_1"/>
    <property type="match status" value="1"/>
</dbReference>
<dbReference type="PROSITE" id="PS50893">
    <property type="entry name" value="ABC_TRANSPORTER_2"/>
    <property type="match status" value="1"/>
</dbReference>
<comment type="function">
    <text evidence="3">Confers selective resistance to kanamycin.</text>
</comment>
<comment type="subcellular location">
    <subcellularLocation>
        <location evidence="3">Vacuole membrane</location>
        <topology evidence="3">Multi-pass membrane protein</topology>
    </subcellularLocation>
</comment>
<comment type="biotechnology">
    <text evidence="3">WBC19 may be a good alternative as a selective marker of transgenic plants to avoid the use of bacterial antibiotic resistance protein (such as neo/nptII).</text>
</comment>
<comment type="similarity">
    <text evidence="4">Belongs to the ABC transporter superfamily. ABCG family. Eye pigment precursor importer (TC 3.A.1.204) subfamily.</text>
</comment>